<comment type="function">
    <text evidence="1">Responsible for the release of ribosomes from messenger RNA at the termination of protein biosynthesis. May increase the efficiency of translation by recycling ribosomes from one round of translation to another.</text>
</comment>
<comment type="subcellular location">
    <subcellularLocation>
        <location evidence="1">Cytoplasm</location>
    </subcellularLocation>
</comment>
<comment type="similarity">
    <text evidence="1">Belongs to the RRF family.</text>
</comment>
<protein>
    <recommendedName>
        <fullName evidence="1">Ribosome-recycling factor</fullName>
        <shortName evidence="1">RRF</shortName>
    </recommendedName>
    <alternativeName>
        <fullName evidence="1">Ribosome-releasing factor</fullName>
    </alternativeName>
</protein>
<gene>
    <name evidence="1" type="primary">frr</name>
    <name type="ordered locus">E2348C_0177</name>
</gene>
<organism>
    <name type="scientific">Escherichia coli O127:H6 (strain E2348/69 / EPEC)</name>
    <dbReference type="NCBI Taxonomy" id="574521"/>
    <lineage>
        <taxon>Bacteria</taxon>
        <taxon>Pseudomonadati</taxon>
        <taxon>Pseudomonadota</taxon>
        <taxon>Gammaproteobacteria</taxon>
        <taxon>Enterobacterales</taxon>
        <taxon>Enterobacteriaceae</taxon>
        <taxon>Escherichia</taxon>
    </lineage>
</organism>
<evidence type="ECO:0000255" key="1">
    <source>
        <dbReference type="HAMAP-Rule" id="MF_00040"/>
    </source>
</evidence>
<dbReference type="EMBL" id="FM180568">
    <property type="protein sequence ID" value="CAS07725.1"/>
    <property type="molecule type" value="Genomic_DNA"/>
</dbReference>
<dbReference type="RefSeq" id="WP_000622418.1">
    <property type="nucleotide sequence ID" value="NC_011601.1"/>
</dbReference>
<dbReference type="SMR" id="B7UIL7"/>
<dbReference type="GeneID" id="93777253"/>
<dbReference type="KEGG" id="ecg:E2348C_0177"/>
<dbReference type="HOGENOM" id="CLU_073981_2_1_6"/>
<dbReference type="Proteomes" id="UP000008205">
    <property type="component" value="Chromosome"/>
</dbReference>
<dbReference type="GO" id="GO:0005829">
    <property type="term" value="C:cytosol"/>
    <property type="evidence" value="ECO:0007669"/>
    <property type="project" value="GOC"/>
</dbReference>
<dbReference type="GO" id="GO:0043023">
    <property type="term" value="F:ribosomal large subunit binding"/>
    <property type="evidence" value="ECO:0007669"/>
    <property type="project" value="TreeGrafter"/>
</dbReference>
<dbReference type="GO" id="GO:0002184">
    <property type="term" value="P:cytoplasmic translational termination"/>
    <property type="evidence" value="ECO:0007669"/>
    <property type="project" value="TreeGrafter"/>
</dbReference>
<dbReference type="CDD" id="cd00520">
    <property type="entry name" value="RRF"/>
    <property type="match status" value="1"/>
</dbReference>
<dbReference type="FunFam" id="1.10.132.20:FF:000001">
    <property type="entry name" value="Ribosome-recycling factor"/>
    <property type="match status" value="1"/>
</dbReference>
<dbReference type="FunFam" id="3.30.1360.40:FF:000001">
    <property type="entry name" value="Ribosome-recycling factor"/>
    <property type="match status" value="1"/>
</dbReference>
<dbReference type="Gene3D" id="3.30.1360.40">
    <property type="match status" value="1"/>
</dbReference>
<dbReference type="Gene3D" id="1.10.132.20">
    <property type="entry name" value="Ribosome-recycling factor"/>
    <property type="match status" value="1"/>
</dbReference>
<dbReference type="HAMAP" id="MF_00040">
    <property type="entry name" value="RRF"/>
    <property type="match status" value="1"/>
</dbReference>
<dbReference type="InterPro" id="IPR002661">
    <property type="entry name" value="Ribosome_recyc_fac"/>
</dbReference>
<dbReference type="InterPro" id="IPR023584">
    <property type="entry name" value="Ribosome_recyc_fac_dom"/>
</dbReference>
<dbReference type="InterPro" id="IPR036191">
    <property type="entry name" value="RRF_sf"/>
</dbReference>
<dbReference type="NCBIfam" id="TIGR00496">
    <property type="entry name" value="frr"/>
    <property type="match status" value="1"/>
</dbReference>
<dbReference type="PANTHER" id="PTHR20982:SF3">
    <property type="entry name" value="MITOCHONDRIAL RIBOSOME RECYCLING FACTOR PSEUDO 1"/>
    <property type="match status" value="1"/>
</dbReference>
<dbReference type="PANTHER" id="PTHR20982">
    <property type="entry name" value="RIBOSOME RECYCLING FACTOR"/>
    <property type="match status" value="1"/>
</dbReference>
<dbReference type="Pfam" id="PF01765">
    <property type="entry name" value="RRF"/>
    <property type="match status" value="1"/>
</dbReference>
<dbReference type="SUPFAM" id="SSF55194">
    <property type="entry name" value="Ribosome recycling factor, RRF"/>
    <property type="match status" value="1"/>
</dbReference>
<sequence>MISDIRKDAEVRMDKCVEAFKTQISKIRTGRASPSLLDGIVVEYYGTPTPLRQLASVTVEDSRTLKINVFDRSMSPAVEKAIMASDLGLNPNSAGSDIRVPLPPLTEERRKDLTKIVRGEAEQARVAVRNVRRDANDKVKALLKDKEISEDDDRRSQDDVQKLTDAAIKKIEAALADKEAELMQF</sequence>
<feature type="chain" id="PRO_1000194925" description="Ribosome-recycling factor">
    <location>
        <begin position="1"/>
        <end position="185"/>
    </location>
</feature>
<feature type="modified residue" description="N6-acetyllysine" evidence="1">
    <location>
        <position position="162"/>
    </location>
</feature>
<name>RRF_ECO27</name>
<proteinExistence type="inferred from homology"/>
<accession>B7UIL7</accession>
<reference key="1">
    <citation type="journal article" date="2009" name="J. Bacteriol.">
        <title>Complete genome sequence and comparative genome analysis of enteropathogenic Escherichia coli O127:H6 strain E2348/69.</title>
        <authorList>
            <person name="Iguchi A."/>
            <person name="Thomson N.R."/>
            <person name="Ogura Y."/>
            <person name="Saunders D."/>
            <person name="Ooka T."/>
            <person name="Henderson I.R."/>
            <person name="Harris D."/>
            <person name="Asadulghani M."/>
            <person name="Kurokawa K."/>
            <person name="Dean P."/>
            <person name="Kenny B."/>
            <person name="Quail M.A."/>
            <person name="Thurston S."/>
            <person name="Dougan G."/>
            <person name="Hayashi T."/>
            <person name="Parkhill J."/>
            <person name="Frankel G."/>
        </authorList>
    </citation>
    <scope>NUCLEOTIDE SEQUENCE [LARGE SCALE GENOMIC DNA]</scope>
    <source>
        <strain>E2348/69 / EPEC</strain>
    </source>
</reference>
<keyword id="KW-0007">Acetylation</keyword>
<keyword id="KW-0963">Cytoplasm</keyword>
<keyword id="KW-0648">Protein biosynthesis</keyword>
<keyword id="KW-1185">Reference proteome</keyword>